<proteinExistence type="inferred from homology"/>
<sequence>MSYFYRLKLMKEAVLVKLPFTSLPLLLQTLSRKSRDMEIKNYSSSTSGFILLGLSSNPQLQKPLFAIFLIMYLLAAVGNVLIIPAIYSDPRLHTPMYFFLSNLSFMDICFTTVIVPKMLVNFLSETKVISYVGCLAQMYFFMAFGNTDSYLLASMAIDRLVAICNPLHYDVVMKPRHCLLMLLGSCSISHLHSLFRVLLMSRLSFCASHIIKHFFCDTQPVLKLSCSDTSSSQMVVMTETLAVIVTPFLCIIFSYLRIMVTVLRIPSAAGKWKAFSTCGSHLTAVALFYGSIIYVYFRPLSMYSVVRDRVATVMYTVVTPMLNPFIYSLRNKDMKRGLKKLQDRIYR</sequence>
<accession>Q8NGR2</accession>
<accession>Q6IFM8</accession>
<accession>Q96R80</accession>
<gene>
    <name type="primary">OR1L6</name>
    <name type="synonym">OR1L7</name>
</gene>
<organism>
    <name type="scientific">Homo sapiens</name>
    <name type="common">Human</name>
    <dbReference type="NCBI Taxonomy" id="9606"/>
    <lineage>
        <taxon>Eukaryota</taxon>
        <taxon>Metazoa</taxon>
        <taxon>Chordata</taxon>
        <taxon>Craniata</taxon>
        <taxon>Vertebrata</taxon>
        <taxon>Euteleostomi</taxon>
        <taxon>Mammalia</taxon>
        <taxon>Eutheria</taxon>
        <taxon>Euarchontoglires</taxon>
        <taxon>Primates</taxon>
        <taxon>Haplorrhini</taxon>
        <taxon>Catarrhini</taxon>
        <taxon>Hominidae</taxon>
        <taxon>Homo</taxon>
    </lineage>
</organism>
<reference key="1">
    <citation type="submission" date="2001-07" db="EMBL/GenBank/DDBJ databases">
        <title>Genome-wide discovery and analysis of human seven transmembrane helix receptor genes.</title>
        <authorList>
            <person name="Suwa M."/>
            <person name="Sato T."/>
            <person name="Okouchi I."/>
            <person name="Arita M."/>
            <person name="Futami K."/>
            <person name="Matsumoto S."/>
            <person name="Tsutsumi S."/>
            <person name="Aburatani H."/>
            <person name="Asai K."/>
            <person name="Akiyama Y."/>
        </authorList>
    </citation>
    <scope>NUCLEOTIDE SEQUENCE [GENOMIC DNA]</scope>
</reference>
<reference key="2">
    <citation type="journal article" date="2004" name="Nature">
        <title>DNA sequence and analysis of human chromosome 9.</title>
        <authorList>
            <person name="Humphray S.J."/>
            <person name="Oliver K."/>
            <person name="Hunt A.R."/>
            <person name="Plumb R.W."/>
            <person name="Loveland J.E."/>
            <person name="Howe K.L."/>
            <person name="Andrews T.D."/>
            <person name="Searle S."/>
            <person name="Hunt S.E."/>
            <person name="Scott C.E."/>
            <person name="Jones M.C."/>
            <person name="Ainscough R."/>
            <person name="Almeida J.P."/>
            <person name="Ambrose K.D."/>
            <person name="Ashwell R.I.S."/>
            <person name="Babbage A.K."/>
            <person name="Babbage S."/>
            <person name="Bagguley C.L."/>
            <person name="Bailey J."/>
            <person name="Banerjee R."/>
            <person name="Barker D.J."/>
            <person name="Barlow K.F."/>
            <person name="Bates K."/>
            <person name="Beasley H."/>
            <person name="Beasley O."/>
            <person name="Bird C.P."/>
            <person name="Bray-Allen S."/>
            <person name="Brown A.J."/>
            <person name="Brown J.Y."/>
            <person name="Burford D."/>
            <person name="Burrill W."/>
            <person name="Burton J."/>
            <person name="Carder C."/>
            <person name="Carter N.P."/>
            <person name="Chapman J.C."/>
            <person name="Chen Y."/>
            <person name="Clarke G."/>
            <person name="Clark S.Y."/>
            <person name="Clee C.M."/>
            <person name="Clegg S."/>
            <person name="Collier R.E."/>
            <person name="Corby N."/>
            <person name="Crosier M."/>
            <person name="Cummings A.T."/>
            <person name="Davies J."/>
            <person name="Dhami P."/>
            <person name="Dunn M."/>
            <person name="Dutta I."/>
            <person name="Dyer L.W."/>
            <person name="Earthrowl M.E."/>
            <person name="Faulkner L."/>
            <person name="Fleming C.J."/>
            <person name="Frankish A."/>
            <person name="Frankland J.A."/>
            <person name="French L."/>
            <person name="Fricker D.G."/>
            <person name="Garner P."/>
            <person name="Garnett J."/>
            <person name="Ghori J."/>
            <person name="Gilbert J.G.R."/>
            <person name="Glison C."/>
            <person name="Grafham D.V."/>
            <person name="Gribble S."/>
            <person name="Griffiths C."/>
            <person name="Griffiths-Jones S."/>
            <person name="Grocock R."/>
            <person name="Guy J."/>
            <person name="Hall R.E."/>
            <person name="Hammond S."/>
            <person name="Harley J.L."/>
            <person name="Harrison E.S.I."/>
            <person name="Hart E.A."/>
            <person name="Heath P.D."/>
            <person name="Henderson C.D."/>
            <person name="Hopkins B.L."/>
            <person name="Howard P.J."/>
            <person name="Howden P.J."/>
            <person name="Huckle E."/>
            <person name="Johnson C."/>
            <person name="Johnson D."/>
            <person name="Joy A.A."/>
            <person name="Kay M."/>
            <person name="Keenan S."/>
            <person name="Kershaw J.K."/>
            <person name="Kimberley A.M."/>
            <person name="King A."/>
            <person name="Knights A."/>
            <person name="Laird G.K."/>
            <person name="Langford C."/>
            <person name="Lawlor S."/>
            <person name="Leongamornlert D.A."/>
            <person name="Leversha M."/>
            <person name="Lloyd C."/>
            <person name="Lloyd D.M."/>
            <person name="Lovell J."/>
            <person name="Martin S."/>
            <person name="Mashreghi-Mohammadi M."/>
            <person name="Matthews L."/>
            <person name="McLaren S."/>
            <person name="McLay K.E."/>
            <person name="McMurray A."/>
            <person name="Milne S."/>
            <person name="Nickerson T."/>
            <person name="Nisbett J."/>
            <person name="Nordsiek G."/>
            <person name="Pearce A.V."/>
            <person name="Peck A.I."/>
            <person name="Porter K.M."/>
            <person name="Pandian R."/>
            <person name="Pelan S."/>
            <person name="Phillimore B."/>
            <person name="Povey S."/>
            <person name="Ramsey Y."/>
            <person name="Rand V."/>
            <person name="Scharfe M."/>
            <person name="Sehra H.K."/>
            <person name="Shownkeen R."/>
            <person name="Sims S.K."/>
            <person name="Skuce C.D."/>
            <person name="Smith M."/>
            <person name="Steward C.A."/>
            <person name="Swarbreck D."/>
            <person name="Sycamore N."/>
            <person name="Tester J."/>
            <person name="Thorpe A."/>
            <person name="Tracey A."/>
            <person name="Tromans A."/>
            <person name="Thomas D.W."/>
            <person name="Wall M."/>
            <person name="Wallis J.M."/>
            <person name="West A.P."/>
            <person name="Whitehead S.L."/>
            <person name="Willey D.L."/>
            <person name="Williams S.A."/>
            <person name="Wilming L."/>
            <person name="Wray P.W."/>
            <person name="Young L."/>
            <person name="Ashurst J.L."/>
            <person name="Coulson A."/>
            <person name="Blocker H."/>
            <person name="Durbin R.M."/>
            <person name="Sulston J.E."/>
            <person name="Hubbard T."/>
            <person name="Jackson M.J."/>
            <person name="Bentley D.R."/>
            <person name="Beck S."/>
            <person name="Rogers J."/>
            <person name="Dunham I."/>
        </authorList>
    </citation>
    <scope>NUCLEOTIDE SEQUENCE [LARGE SCALE GENOMIC DNA]</scope>
</reference>
<reference key="3">
    <citation type="journal article" date="2002" name="Genomics">
        <title>DEFOG: a practical scheme for deciphering families of genes.</title>
        <authorList>
            <person name="Fuchs T."/>
            <person name="Malecova B."/>
            <person name="Linhart C."/>
            <person name="Sharan R."/>
            <person name="Khen M."/>
            <person name="Herwig R."/>
            <person name="Shmulevich D."/>
            <person name="Elkon R."/>
            <person name="Steinfath M."/>
            <person name="O'Brien J.K."/>
            <person name="Radelof U."/>
            <person name="Lehrach H."/>
            <person name="Lancet D."/>
            <person name="Shamir R."/>
        </authorList>
    </citation>
    <scope>NUCLEOTIDE SEQUENCE [GENOMIC DNA] OF 105-319</scope>
</reference>
<reference key="4">
    <citation type="journal article" date="2004" name="Proc. Natl. Acad. Sci. U.S.A.">
        <title>The human olfactory receptor gene family.</title>
        <authorList>
            <person name="Malnic B."/>
            <person name="Godfrey P.A."/>
            <person name="Buck L.B."/>
        </authorList>
    </citation>
    <scope>IDENTIFICATION</scope>
</reference>
<reference key="5">
    <citation type="journal article" date="2004" name="Proc. Natl. Acad. Sci. U.S.A.">
        <authorList>
            <person name="Malnic B."/>
            <person name="Godfrey P.A."/>
            <person name="Buck L.B."/>
        </authorList>
    </citation>
    <scope>ERRATUM OF PUBMED:14983052</scope>
</reference>
<evidence type="ECO:0000255" key="1"/>
<evidence type="ECO:0000255" key="2">
    <source>
        <dbReference type="PROSITE-ProRule" id="PRU00521"/>
    </source>
</evidence>
<evidence type="ECO:0000305" key="3"/>
<name>OR1L6_HUMAN</name>
<keyword id="KW-1003">Cell membrane</keyword>
<keyword id="KW-1015">Disulfide bond</keyword>
<keyword id="KW-0297">G-protein coupled receptor</keyword>
<keyword id="KW-0325">Glycoprotein</keyword>
<keyword id="KW-0472">Membrane</keyword>
<keyword id="KW-0552">Olfaction</keyword>
<keyword id="KW-0675">Receptor</keyword>
<keyword id="KW-1185">Reference proteome</keyword>
<keyword id="KW-0716">Sensory transduction</keyword>
<keyword id="KW-0807">Transducer</keyword>
<keyword id="KW-0812">Transmembrane</keyword>
<keyword id="KW-1133">Transmembrane helix</keyword>
<feature type="chain" id="PRO_0000150445" description="Olfactory receptor 1L6">
    <location>
        <begin position="1"/>
        <end position="347"/>
    </location>
</feature>
<feature type="topological domain" description="Extracellular" evidence="1">
    <location>
        <begin position="1"/>
        <end position="62"/>
    </location>
</feature>
<feature type="transmembrane region" description="Helical; Name=1" evidence="1">
    <location>
        <begin position="63"/>
        <end position="86"/>
    </location>
</feature>
<feature type="topological domain" description="Cytoplasmic" evidence="1">
    <location>
        <begin position="87"/>
        <end position="94"/>
    </location>
</feature>
<feature type="transmembrane region" description="Helical; Name=2" evidence="1">
    <location>
        <begin position="95"/>
        <end position="116"/>
    </location>
</feature>
<feature type="topological domain" description="Extracellular" evidence="1">
    <location>
        <begin position="117"/>
        <end position="137"/>
    </location>
</feature>
<feature type="transmembrane region" description="Helical; Name=3" evidence="1">
    <location>
        <begin position="138"/>
        <end position="157"/>
    </location>
</feature>
<feature type="topological domain" description="Cytoplasmic" evidence="1">
    <location>
        <begin position="158"/>
        <end position="176"/>
    </location>
</feature>
<feature type="transmembrane region" description="Helical; Name=4" evidence="1">
    <location>
        <begin position="177"/>
        <end position="195"/>
    </location>
</feature>
<feature type="topological domain" description="Extracellular" evidence="1">
    <location>
        <begin position="196"/>
        <end position="233"/>
    </location>
</feature>
<feature type="transmembrane region" description="Helical; Name=5" evidence="1">
    <location>
        <begin position="234"/>
        <end position="256"/>
    </location>
</feature>
<feature type="topological domain" description="Cytoplasmic" evidence="1">
    <location>
        <begin position="257"/>
        <end position="273"/>
    </location>
</feature>
<feature type="transmembrane region" description="Helical; Name=6" evidence="1">
    <location>
        <begin position="274"/>
        <end position="296"/>
    </location>
</feature>
<feature type="topological domain" description="Extracellular" evidence="1">
    <location>
        <begin position="297"/>
        <end position="309"/>
    </location>
</feature>
<feature type="transmembrane region" description="Helical; Name=7" evidence="1">
    <location>
        <begin position="310"/>
        <end position="329"/>
    </location>
</feature>
<feature type="topological domain" description="Cytoplasmic" evidence="1">
    <location>
        <begin position="330"/>
        <end position="347"/>
    </location>
</feature>
<feature type="glycosylation site" description="N-linked (GlcNAc...) asparagine" evidence="1">
    <location>
        <position position="41"/>
    </location>
</feature>
<feature type="disulfide bond" evidence="2">
    <location>
        <begin position="134"/>
        <end position="226"/>
    </location>
</feature>
<feature type="sequence variant" id="VAR_055056" description="In dbSNP:rs10760252.">
    <original>Q</original>
    <variation>K</variation>
    <location>
        <position position="59"/>
    </location>
</feature>
<feature type="sequence variant" id="VAR_055057" description="In dbSNP:rs4838012.">
    <original>C</original>
    <variation>Y</variation>
    <location>
        <position position="186"/>
    </location>
</feature>
<feature type="sequence variant" id="VAR_055058" description="In dbSNP:rs10985760.">
    <original>I</original>
    <variation>T</variation>
    <location>
        <position position="251"/>
    </location>
</feature>
<feature type="sequence variant" id="VAR_055059" description="In dbSNP:rs10818741.">
    <original>M</original>
    <variation>I</variation>
    <location>
        <position position="259"/>
    </location>
</feature>
<dbReference type="EMBL" id="AB065727">
    <property type="protein sequence ID" value="BAC05948.1"/>
    <property type="status" value="ALT_INIT"/>
    <property type="molecule type" value="Genomic_DNA"/>
</dbReference>
<dbReference type="EMBL" id="AC006313">
    <property type="status" value="NOT_ANNOTATED_CDS"/>
    <property type="molecule type" value="Genomic_DNA"/>
</dbReference>
<dbReference type="EMBL" id="AF399563">
    <property type="protein sequence ID" value="AAK95048.1"/>
    <property type="molecule type" value="Genomic_DNA"/>
</dbReference>
<dbReference type="EMBL" id="BK004234">
    <property type="protein sequence ID" value="DAA04632.1"/>
    <property type="molecule type" value="Genomic_DNA"/>
</dbReference>
<dbReference type="RefSeq" id="NP_001004453.2">
    <property type="nucleotide sequence ID" value="NM_001004453.2"/>
</dbReference>
<dbReference type="SMR" id="Q8NGR2"/>
<dbReference type="FunCoup" id="Q8NGR2">
    <property type="interactions" value="475"/>
</dbReference>
<dbReference type="STRING" id="9606.ENSP00000304235"/>
<dbReference type="GlyCosmos" id="Q8NGR2">
    <property type="glycosylation" value="1 site, No reported glycans"/>
</dbReference>
<dbReference type="GlyGen" id="Q8NGR2">
    <property type="glycosylation" value="1 site"/>
</dbReference>
<dbReference type="iPTMnet" id="Q8NGR2"/>
<dbReference type="PhosphoSitePlus" id="Q8NGR2"/>
<dbReference type="BioMuta" id="OR1L6"/>
<dbReference type="DMDM" id="229462929"/>
<dbReference type="MassIVE" id="Q8NGR2"/>
<dbReference type="PaxDb" id="9606-ENSP00000304235"/>
<dbReference type="PeptideAtlas" id="Q8NGR2"/>
<dbReference type="Antibodypedia" id="64335">
    <property type="antibodies" value="44 antibodies from 14 providers"/>
</dbReference>
<dbReference type="DNASU" id="392390"/>
<dbReference type="Ensembl" id="ENST00000373684.1">
    <property type="protein sequence ID" value="ENSP00000362788.1"/>
    <property type="gene ID" value="ENSG00000171459.4"/>
</dbReference>
<dbReference type="GeneID" id="392390"/>
<dbReference type="KEGG" id="hsa:392390"/>
<dbReference type="UCSC" id="uc022bna.1">
    <property type="organism name" value="human"/>
</dbReference>
<dbReference type="AGR" id="HGNC:8218"/>
<dbReference type="CTD" id="392390"/>
<dbReference type="GeneCards" id="OR1L6"/>
<dbReference type="HGNC" id="HGNC:8218">
    <property type="gene designation" value="OR1L6"/>
</dbReference>
<dbReference type="HPA" id="ENSG00000171459">
    <property type="expression patterns" value="Not detected"/>
</dbReference>
<dbReference type="neXtProt" id="NX_Q8NGR2"/>
<dbReference type="PharmGKB" id="PA32087"/>
<dbReference type="VEuPathDB" id="HostDB:ENSG00000171459"/>
<dbReference type="eggNOG" id="ENOG502RTXQ">
    <property type="taxonomic scope" value="Eukaryota"/>
</dbReference>
<dbReference type="GeneTree" id="ENSGT00940000165463"/>
<dbReference type="HOGENOM" id="CLU_012526_5_5_1"/>
<dbReference type="InParanoid" id="Q8NGR2"/>
<dbReference type="OrthoDB" id="8772365at2759"/>
<dbReference type="PAN-GO" id="Q8NGR2">
    <property type="GO annotations" value="3 GO annotations based on evolutionary models"/>
</dbReference>
<dbReference type="PhylomeDB" id="Q8NGR2"/>
<dbReference type="TreeFam" id="TF337210"/>
<dbReference type="PathwayCommons" id="Q8NGR2"/>
<dbReference type="Reactome" id="R-HSA-9752946">
    <property type="pathway name" value="Expression and translocation of olfactory receptors"/>
</dbReference>
<dbReference type="BioGRID-ORCS" id="392390">
    <property type="hits" value="7 hits in 725 CRISPR screens"/>
</dbReference>
<dbReference type="GeneWiki" id="OR1L6"/>
<dbReference type="GenomeRNAi" id="392390"/>
<dbReference type="Pharos" id="Q8NGR2">
    <property type="development level" value="Tdark"/>
</dbReference>
<dbReference type="PRO" id="PR:Q8NGR2"/>
<dbReference type="Proteomes" id="UP000005640">
    <property type="component" value="Chromosome 9"/>
</dbReference>
<dbReference type="RNAct" id="Q8NGR2">
    <property type="molecule type" value="protein"/>
</dbReference>
<dbReference type="Bgee" id="ENSG00000171459">
    <property type="expression patterns" value="Expressed in sural nerve and 1 other cell type or tissue"/>
</dbReference>
<dbReference type="ExpressionAtlas" id="Q8NGR2">
    <property type="expression patterns" value="baseline and differential"/>
</dbReference>
<dbReference type="GO" id="GO:0005886">
    <property type="term" value="C:plasma membrane"/>
    <property type="evidence" value="ECO:0000318"/>
    <property type="project" value="GO_Central"/>
</dbReference>
<dbReference type="GO" id="GO:0004930">
    <property type="term" value="F:G protein-coupled receptor activity"/>
    <property type="evidence" value="ECO:0007669"/>
    <property type="project" value="UniProtKB-KW"/>
</dbReference>
<dbReference type="GO" id="GO:0004984">
    <property type="term" value="F:olfactory receptor activity"/>
    <property type="evidence" value="ECO:0000318"/>
    <property type="project" value="GO_Central"/>
</dbReference>
<dbReference type="GO" id="GO:0007165">
    <property type="term" value="P:signal transduction"/>
    <property type="evidence" value="ECO:0000318"/>
    <property type="project" value="GO_Central"/>
</dbReference>
<dbReference type="CDD" id="cd15235">
    <property type="entry name" value="7tmA_OR1A-like"/>
    <property type="match status" value="1"/>
</dbReference>
<dbReference type="FunFam" id="1.20.1070.10:FF:000009">
    <property type="entry name" value="Olfactory receptor"/>
    <property type="match status" value="1"/>
</dbReference>
<dbReference type="Gene3D" id="1.20.1070.10">
    <property type="entry name" value="Rhodopsin 7-helix transmembrane proteins"/>
    <property type="match status" value="1"/>
</dbReference>
<dbReference type="InterPro" id="IPR000276">
    <property type="entry name" value="GPCR_Rhodpsn"/>
</dbReference>
<dbReference type="InterPro" id="IPR017452">
    <property type="entry name" value="GPCR_Rhodpsn_7TM"/>
</dbReference>
<dbReference type="InterPro" id="IPR000725">
    <property type="entry name" value="Olfact_rcpt"/>
</dbReference>
<dbReference type="PANTHER" id="PTHR48001">
    <property type="entry name" value="OLFACTORY RECEPTOR"/>
    <property type="match status" value="1"/>
</dbReference>
<dbReference type="Pfam" id="PF13853">
    <property type="entry name" value="7tm_4"/>
    <property type="match status" value="1"/>
</dbReference>
<dbReference type="PRINTS" id="PR00237">
    <property type="entry name" value="GPCRRHODOPSN"/>
</dbReference>
<dbReference type="PRINTS" id="PR00245">
    <property type="entry name" value="OLFACTORYR"/>
</dbReference>
<dbReference type="SUPFAM" id="SSF81321">
    <property type="entry name" value="Family A G protein-coupled receptor-like"/>
    <property type="match status" value="1"/>
</dbReference>
<dbReference type="PROSITE" id="PS50262">
    <property type="entry name" value="G_PROTEIN_RECEP_F1_2"/>
    <property type="match status" value="1"/>
</dbReference>
<protein>
    <recommendedName>
        <fullName>Olfactory receptor 1L6</fullName>
    </recommendedName>
    <alternativeName>
        <fullName>Olfactory receptor 1L7</fullName>
    </alternativeName>
    <alternativeName>
        <fullName>Olfactory receptor OR9-30</fullName>
    </alternativeName>
</protein>
<comment type="function">
    <text evidence="3">Odorant receptor.</text>
</comment>
<comment type="subcellular location">
    <subcellularLocation>
        <location>Cell membrane</location>
        <topology>Multi-pass membrane protein</topology>
    </subcellularLocation>
</comment>
<comment type="similarity">
    <text evidence="2">Belongs to the G-protein coupled receptor 1 family.</text>
</comment>
<comment type="caution">
    <text evidence="3">It is uncertain whether Met-1 or Met-37 is the initiator.</text>
</comment>
<comment type="sequence caution" evidence="3">
    <conflict type="erroneous initiation">
        <sequence resource="EMBL-CDS" id="BAC05948"/>
    </conflict>
    <text>Truncated N-terminus.</text>
</comment>
<comment type="online information" name="Human Olfactory Receptor Data Exploratorium (HORDE)">
    <link uri="http://genome.weizmann.ac.il/horde/card/index/symbol:OR1L6"/>
</comment>